<name>UREI_HELPJ</name>
<sequence>MLGLVLLYVGIVLISNGICGLTKVDPKSTAVMNFFVGGLSIVCNVVVITYSALHPTAPVEGAEDIVQVSHHLTSFYGPATGLLFGFTYLYAAINHTFGLDWRPYSWYSLFVAINTVPAAILSHYSDMLDDHKVLGITEGDWWAIIWLAWGVLWLTAFIENILKIPLGKFTPWLAIIEGILTAWIPAWLLFIQHWV</sequence>
<organism>
    <name type="scientific">Helicobacter pylori (strain J99 / ATCC 700824)</name>
    <name type="common">Campylobacter pylori J99</name>
    <dbReference type="NCBI Taxonomy" id="85963"/>
    <lineage>
        <taxon>Bacteria</taxon>
        <taxon>Pseudomonadati</taxon>
        <taxon>Campylobacterota</taxon>
        <taxon>Epsilonproteobacteria</taxon>
        <taxon>Campylobacterales</taxon>
        <taxon>Helicobacteraceae</taxon>
        <taxon>Helicobacter</taxon>
    </lineage>
</organism>
<accession>P56874</accession>
<feature type="chain" id="PRO_0000067681" description="Acid-activated urea channel">
    <location>
        <begin position="1"/>
        <end position="195"/>
    </location>
</feature>
<feature type="topological domain" description="Periplasmic" evidence="2">
    <location>
        <position position="1"/>
    </location>
</feature>
<feature type="transmembrane region" description="Helical" evidence="2">
    <location>
        <begin position="2"/>
        <end position="21"/>
    </location>
</feature>
<feature type="topological domain" description="Cytoplasmic" evidence="2">
    <location>
        <begin position="22"/>
        <end position="33"/>
    </location>
</feature>
<feature type="transmembrane region" description="Helical" evidence="2">
    <location>
        <begin position="34"/>
        <end position="53"/>
    </location>
</feature>
<feature type="topological domain" description="Periplasmic" evidence="2">
    <location>
        <begin position="54"/>
        <end position="74"/>
    </location>
</feature>
<feature type="transmembrane region" description="Helical" evidence="2">
    <location>
        <begin position="75"/>
        <end position="93"/>
    </location>
</feature>
<feature type="topological domain" description="Cytoplasmic" evidence="2">
    <location>
        <begin position="94"/>
        <end position="103"/>
    </location>
</feature>
<feature type="transmembrane region" description="Helical" evidence="2">
    <location>
        <begin position="104"/>
        <end position="122"/>
    </location>
</feature>
<feature type="topological domain" description="Periplasmic" evidence="2">
    <location>
        <begin position="123"/>
        <end position="140"/>
    </location>
</feature>
<feature type="transmembrane region" description="Helical" evidence="2">
    <location>
        <begin position="141"/>
        <end position="158"/>
    </location>
</feature>
<feature type="topological domain" description="Cytoplasmic" evidence="2">
    <location>
        <begin position="159"/>
        <end position="171"/>
    </location>
</feature>
<feature type="transmembrane region" description="Helical" evidence="2">
    <location>
        <begin position="172"/>
        <end position="191"/>
    </location>
</feature>
<feature type="topological domain" description="Periplasmic" evidence="2">
    <location>
        <begin position="192"/>
        <end position="195"/>
    </location>
</feature>
<feature type="helix" evidence="5">
    <location>
        <begin position="2"/>
        <end position="19"/>
    </location>
</feature>
<feature type="turn" evidence="5">
    <location>
        <begin position="20"/>
        <end position="23"/>
    </location>
</feature>
<feature type="helix" evidence="5">
    <location>
        <begin position="26"/>
        <end position="53"/>
    </location>
</feature>
<feature type="strand" evidence="5">
    <location>
        <begin position="71"/>
        <end position="74"/>
    </location>
</feature>
<feature type="helix" evidence="5">
    <location>
        <begin position="76"/>
        <end position="96"/>
    </location>
</feature>
<feature type="helix" evidence="5">
    <location>
        <begin position="102"/>
        <end position="124"/>
    </location>
</feature>
<feature type="strand" evidence="4">
    <location>
        <begin position="135"/>
        <end position="137"/>
    </location>
</feature>
<feature type="helix" evidence="5">
    <location>
        <begin position="138"/>
        <end position="160"/>
    </location>
</feature>
<feature type="helix" evidence="5">
    <location>
        <begin position="169"/>
        <end position="180"/>
    </location>
</feature>
<feature type="turn" evidence="5">
    <location>
        <begin position="181"/>
        <end position="183"/>
    </location>
</feature>
<feature type="helix" evidence="5">
    <location>
        <begin position="184"/>
        <end position="191"/>
    </location>
</feature>
<keyword id="KW-0002">3D-structure</keyword>
<keyword id="KW-0997">Cell inner membrane</keyword>
<keyword id="KW-1003">Cell membrane</keyword>
<keyword id="KW-0472">Membrane</keyword>
<keyword id="KW-0812">Transmembrane</keyword>
<keyword id="KW-1133">Transmembrane helix</keyword>
<keyword id="KW-0813">Transport</keyword>
<reference key="1">
    <citation type="journal article" date="1999" name="Nature">
        <title>Genomic sequence comparison of two unrelated isolates of the human gastric pathogen Helicobacter pylori.</title>
        <authorList>
            <person name="Alm R.A."/>
            <person name="Ling L.-S.L."/>
            <person name="Moir D.T."/>
            <person name="King B.L."/>
            <person name="Brown E.D."/>
            <person name="Doig P.C."/>
            <person name="Smith D.R."/>
            <person name="Noonan B."/>
            <person name="Guild B.C."/>
            <person name="deJonge B.L."/>
            <person name="Carmel G."/>
            <person name="Tummino P.J."/>
            <person name="Caruso A."/>
            <person name="Uria-Nickelsen M."/>
            <person name="Mills D.M."/>
            <person name="Ives C."/>
            <person name="Gibson R."/>
            <person name="Merberg D."/>
            <person name="Mills S.D."/>
            <person name="Jiang Q."/>
            <person name="Taylor D.E."/>
            <person name="Vovis G.F."/>
            <person name="Trust T.J."/>
        </authorList>
    </citation>
    <scope>NUCLEOTIDE SEQUENCE [LARGE SCALE GENOMIC DNA]</scope>
    <source>
        <strain>J99 / ATCC 700824</strain>
    </source>
</reference>
<evidence type="ECO:0000250" key="1"/>
<evidence type="ECO:0000255" key="2"/>
<evidence type="ECO:0000305" key="3"/>
<evidence type="ECO:0007829" key="4">
    <source>
        <dbReference type="PDB" id="3UX4"/>
    </source>
</evidence>
<evidence type="ECO:0007829" key="5">
    <source>
        <dbReference type="PDB" id="6NSJ"/>
    </source>
</evidence>
<comment type="function">
    <text evidence="1">Functions as a specific, H(+)-activated urea channel that increases the rate of urea entry into the cytoplasm, resulting in activation of cytoplasmic urease at acidic medium pH. Is essential for H.pylori gastric survival and colonization. Is necessary for the adaptation of urease activity to the extracellular pH, as in the presence of urea, UreI rapidly enhances the production of ammonia in the extracellular medium when the pH of the medium was decreased to pH5 or below (By similarity).</text>
</comment>
<comment type="subunit">
    <text evidence="1">Forms a membrane complex with the urease UreA/UreB.</text>
</comment>
<comment type="interaction">
    <interactant intactId="EBI-16027017">
        <id>P56874</id>
    </interactant>
    <interactant intactId="EBI-16027017">
        <id>P56874</id>
        <label>ureI</label>
    </interactant>
    <organismsDiffer>false</organismsDiffer>
    <experiments>2</experiments>
</comment>
<comment type="subcellular location">
    <subcellularLocation>
        <location evidence="1">Cell inner membrane</location>
        <topology evidence="1">Multi-pass membrane protein</topology>
    </subcellularLocation>
</comment>
<comment type="similarity">
    <text evidence="3">Belongs to the AmiS/UreI family.</text>
</comment>
<gene>
    <name type="primary">ureI</name>
    <name type="ordered locus">jhp_0066</name>
</gene>
<dbReference type="EMBL" id="AE001439">
    <property type="protein sequence ID" value="AAD05637.1"/>
    <property type="molecule type" value="Genomic_DNA"/>
</dbReference>
<dbReference type="PIR" id="F71979">
    <property type="entry name" value="F71979"/>
</dbReference>
<dbReference type="RefSeq" id="WP_000901274.1">
    <property type="nucleotide sequence ID" value="NZ_CP011330.1"/>
</dbReference>
<dbReference type="PDB" id="3UX4">
    <property type="method" value="X-ray"/>
    <property type="resolution" value="3.26 A"/>
    <property type="chains" value="A/B/C=1-195"/>
</dbReference>
<dbReference type="PDB" id="6NSJ">
    <property type="method" value="EM"/>
    <property type="resolution" value="2.70 A"/>
    <property type="chains" value="A/B/C/D/E/F=1-195"/>
</dbReference>
<dbReference type="PDB" id="6NSK">
    <property type="method" value="EM"/>
    <property type="resolution" value="2.70 A"/>
    <property type="chains" value="A/B/C/D/E/F=1-195"/>
</dbReference>
<dbReference type="PDBsum" id="3UX4"/>
<dbReference type="PDBsum" id="6NSJ"/>
<dbReference type="PDBsum" id="6NSK"/>
<dbReference type="EMDB" id="EMD-0498"/>
<dbReference type="EMDB" id="EMD-0499"/>
<dbReference type="SMR" id="P56874"/>
<dbReference type="DIP" id="DIP-60123N"/>
<dbReference type="KEGG" id="hpj:jhp_0066"/>
<dbReference type="PATRIC" id="fig|85963.30.peg.968"/>
<dbReference type="EvolutionaryTrace" id="P56874"/>
<dbReference type="Proteomes" id="UP000000804">
    <property type="component" value="Chromosome"/>
</dbReference>
<dbReference type="GO" id="GO:0005886">
    <property type="term" value="C:plasma membrane"/>
    <property type="evidence" value="ECO:0007669"/>
    <property type="project" value="UniProtKB-SubCell"/>
</dbReference>
<dbReference type="GO" id="GO:0042802">
    <property type="term" value="F:identical protein binding"/>
    <property type="evidence" value="ECO:0000353"/>
    <property type="project" value="IntAct"/>
</dbReference>
<dbReference type="CDD" id="cd13404">
    <property type="entry name" value="UreI_AmiS_like"/>
    <property type="match status" value="1"/>
</dbReference>
<dbReference type="FunFam" id="1.25.40.600:FF:000001">
    <property type="entry name" value="Acid-activated urea channel"/>
    <property type="match status" value="1"/>
</dbReference>
<dbReference type="Gene3D" id="1.25.40.600">
    <property type="match status" value="1"/>
</dbReference>
<dbReference type="InterPro" id="IPR003211">
    <property type="entry name" value="AmiSUreI_transpt"/>
</dbReference>
<dbReference type="InterPro" id="IPR038523">
    <property type="entry name" value="AmiSUreI_transpt_sf"/>
</dbReference>
<dbReference type="Pfam" id="PF02293">
    <property type="entry name" value="AmiS_UreI"/>
    <property type="match status" value="1"/>
</dbReference>
<proteinExistence type="evidence at protein level"/>
<protein>
    <recommendedName>
        <fullName>Acid-activated urea channel</fullName>
    </recommendedName>
    <alternativeName>
        <fullName>Urease accessory protein UreI</fullName>
    </alternativeName>
</protein>